<evidence type="ECO:0000255" key="1">
    <source>
        <dbReference type="HAMAP-Rule" id="MF_00725"/>
    </source>
</evidence>
<evidence type="ECO:0000305" key="2">
    <source>
    </source>
</evidence>
<organism>
    <name type="scientific">Yersinia enterocolitica</name>
    <dbReference type="NCBI Taxonomy" id="630"/>
    <lineage>
        <taxon>Bacteria</taxon>
        <taxon>Pseudomonadati</taxon>
        <taxon>Pseudomonadota</taxon>
        <taxon>Gammaproteobacteria</taxon>
        <taxon>Enterobacterales</taxon>
        <taxon>Yersiniaceae</taxon>
        <taxon>Yersinia</taxon>
    </lineage>
</organism>
<accession>O86046</accession>
<sequence length="119" mass="13560">MYKMSTSELLKHIYDINLSYLLLAQRLINDEKASAMFRLGITDTMADALSQLTLPQMVKLAETNQLVCHFRFSDHNTIHHLTKESRVDDLQQIHTGILLSSHLLHELSLKDGSASKKRA</sequence>
<name>FLHD_YEREN</name>
<reference key="1">
    <citation type="journal article" date="1999" name="J. Bacteriol.">
        <title>The Yersinia enterocolitica motility master regulatory operon, flhDC, is required for flagellin production, swimming motility, and swarming motility.</title>
        <authorList>
            <person name="Young G.M."/>
            <person name="Smith M.J."/>
            <person name="Minnich S.A."/>
            <person name="Miller V.L."/>
        </authorList>
    </citation>
    <scope>NUCLEOTIDE SEQUENCE [GENOMIC DNA]</scope>
    <scope>FUNCTION</scope>
    <source>
        <strain>8081V / Serotype O:8</strain>
    </source>
</reference>
<comment type="function">
    <text evidence="2">Functions in complex with FlhC as a master transcriptional regulator that regulates transcription of several flagellar and non-flagellar operons by binding to their promoter region. Activates expression of class 2 flagellar genes, including fliA, which is a flagellum-specific sigma factor that turns on the class 3 genes. Also regulates genes whose products function in a variety of physiological pathways (Probable).</text>
</comment>
<comment type="subunit">
    <text evidence="1">Homodimer; disulfide-linked. Forms a heterohexamer composed of two FlhC and four FlhD subunits. Each FlhC binds a FlhD dimer, forming a heterotrimer, and a hexamer assembles by dimerization of two heterotrimers.</text>
</comment>
<comment type="subcellular location">
    <subcellularLocation>
        <location evidence="1">Cytoplasm</location>
    </subcellularLocation>
</comment>
<comment type="domain">
    <text evidence="1">The C-terminal region contains a putative helix-turn-helix (HTH) motif, suggesting that this region may bind DNA.</text>
</comment>
<comment type="similarity">
    <text evidence="1">Belongs to the FlhD family.</text>
</comment>
<protein>
    <recommendedName>
        <fullName evidence="1">Flagellar transcriptional regulator FlhD</fullName>
    </recommendedName>
</protein>
<gene>
    <name evidence="1" type="primary">flhD</name>
</gene>
<dbReference type="EMBL" id="AF081587">
    <property type="protein sequence ID" value="AAC31210.1"/>
    <property type="molecule type" value="Genomic_DNA"/>
</dbReference>
<dbReference type="SMR" id="O86046"/>
<dbReference type="STRING" id="1443113.LC20_02132"/>
<dbReference type="eggNOG" id="ENOG5031P80">
    <property type="taxonomic scope" value="Bacteria"/>
</dbReference>
<dbReference type="GO" id="GO:0005737">
    <property type="term" value="C:cytoplasm"/>
    <property type="evidence" value="ECO:0007669"/>
    <property type="project" value="UniProtKB-SubCell"/>
</dbReference>
<dbReference type="GO" id="GO:0003677">
    <property type="term" value="F:DNA binding"/>
    <property type="evidence" value="ECO:0007669"/>
    <property type="project" value="UniProtKB-UniRule"/>
</dbReference>
<dbReference type="GO" id="GO:0044780">
    <property type="term" value="P:bacterial-type flagellum assembly"/>
    <property type="evidence" value="ECO:0007669"/>
    <property type="project" value="InterPro"/>
</dbReference>
<dbReference type="GO" id="GO:0045893">
    <property type="term" value="P:positive regulation of DNA-templated transcription"/>
    <property type="evidence" value="ECO:0007669"/>
    <property type="project" value="InterPro"/>
</dbReference>
<dbReference type="GO" id="GO:1902208">
    <property type="term" value="P:regulation of bacterial-type flagellum assembly"/>
    <property type="evidence" value="ECO:0007669"/>
    <property type="project" value="UniProtKB-UniRule"/>
</dbReference>
<dbReference type="Gene3D" id="1.10.4000.10">
    <property type="entry name" value="Flagellar transcriptional activator FlhD"/>
    <property type="match status" value="1"/>
</dbReference>
<dbReference type="HAMAP" id="MF_00725">
    <property type="entry name" value="FlhD"/>
    <property type="match status" value="1"/>
</dbReference>
<dbReference type="InterPro" id="IPR023559">
    <property type="entry name" value="Flagellar_FlhD"/>
</dbReference>
<dbReference type="InterPro" id="IPR036194">
    <property type="entry name" value="FlhD_sf"/>
</dbReference>
<dbReference type="NCBIfam" id="NF002783">
    <property type="entry name" value="PRK02909.1-1"/>
    <property type="match status" value="1"/>
</dbReference>
<dbReference type="Pfam" id="PF05247">
    <property type="entry name" value="FlhD"/>
    <property type="match status" value="1"/>
</dbReference>
<dbReference type="SUPFAM" id="SSF63592">
    <property type="entry name" value="Flagellar transcriptional activator FlhD"/>
    <property type="match status" value="1"/>
</dbReference>
<keyword id="KW-0010">Activator</keyword>
<keyword id="KW-1005">Bacterial flagellum biogenesis</keyword>
<keyword id="KW-0963">Cytoplasm</keyword>
<keyword id="KW-1015">Disulfide bond</keyword>
<keyword id="KW-0238">DNA-binding</keyword>
<keyword id="KW-0804">Transcription</keyword>
<keyword id="KW-0805">Transcription regulation</keyword>
<proteinExistence type="inferred from homology"/>
<feature type="chain" id="PRO_0000182729" description="Flagellar transcriptional regulator FlhD">
    <location>
        <begin position="1"/>
        <end position="119"/>
    </location>
</feature>
<feature type="disulfide bond" description="Interchain" evidence="1">
    <location>
        <position position="68"/>
    </location>
</feature>